<sequence length="497" mass="54512">MVLAQLGGSISRALAQMSNATVIDEKVLGECLNEISRALLQSDVQFKMVRDMQTNIRKIVNLETLAAGTNKRRIIQQAVFTELCNMLDPGKPAFTTKKGKPSVVMFVGLQGSGKTTTCTKYAYYHQRKGFKPSLVCADTFRAGAFDQLKQNATKAKIPFYGSYMESDPVKIAVEGLERFRKENSDLIIIDTSGRHKQEAALFEEMRQVAEATKPDLVIFVMDGSIGQAAFDQAQAFKQSASVGAVIITKLDGHAKGGGALSAVAATKSPVIFIGTGEHIDEFEIFDVKPFVSRLLGMGDLSGLMDKIQDVMPADQQPELLAKLAEGTFTLRLLYEQFQNLLKMGPIGQVFSMLPGFSSELMPKGHEKEGQAKIKRYMTIMDSMTAAELDSTNPKLMTESRIIRIARGSGRQIRDVTDMLEEYKRLAKMWSKMKGLKMPKNGKMSDLSQNLNIQQMTKALPPQVLKQMGGMGGLQALMKQMGGKDMSKMLGGMGLGGD</sequence>
<protein>
    <recommendedName>
        <fullName>Signal recognition particle subunit SRP54 1</fullName>
        <ecNumber evidence="3">3.6.5.4</ecNumber>
    </recommendedName>
    <alternativeName>
        <fullName>Signal recognition particle 54 kDa protein 1</fullName>
        <shortName>SRP54</shortName>
    </alternativeName>
</protein>
<dbReference type="EC" id="3.6.5.4" evidence="3"/>
<dbReference type="EMBL" id="L48284">
    <property type="protein sequence ID" value="AAA79354.1"/>
    <property type="molecule type" value="mRNA"/>
</dbReference>
<dbReference type="PIR" id="T06185">
    <property type="entry name" value="T06185"/>
</dbReference>
<dbReference type="SMR" id="P49968"/>
<dbReference type="ExpressionAtlas" id="P49968">
    <property type="expression patterns" value="baseline and differential"/>
</dbReference>
<dbReference type="GO" id="GO:0005829">
    <property type="term" value="C:cytosol"/>
    <property type="evidence" value="ECO:0007669"/>
    <property type="project" value="TreeGrafter"/>
</dbReference>
<dbReference type="GO" id="GO:0005783">
    <property type="term" value="C:endoplasmic reticulum"/>
    <property type="evidence" value="ECO:0007669"/>
    <property type="project" value="UniProtKB-SubCell"/>
</dbReference>
<dbReference type="GO" id="GO:0005786">
    <property type="term" value="C:signal recognition particle, endoplasmic reticulum targeting"/>
    <property type="evidence" value="ECO:0007669"/>
    <property type="project" value="UniProtKB-KW"/>
</dbReference>
<dbReference type="GO" id="GO:0008312">
    <property type="term" value="F:7S RNA binding"/>
    <property type="evidence" value="ECO:0007669"/>
    <property type="project" value="InterPro"/>
</dbReference>
<dbReference type="GO" id="GO:0016887">
    <property type="term" value="F:ATP hydrolysis activity"/>
    <property type="evidence" value="ECO:0007669"/>
    <property type="project" value="InterPro"/>
</dbReference>
<dbReference type="GO" id="GO:0030942">
    <property type="term" value="F:endoplasmic reticulum signal peptide binding"/>
    <property type="evidence" value="ECO:0007669"/>
    <property type="project" value="TreeGrafter"/>
</dbReference>
<dbReference type="GO" id="GO:0005525">
    <property type="term" value="F:GTP binding"/>
    <property type="evidence" value="ECO:0007669"/>
    <property type="project" value="UniProtKB-KW"/>
</dbReference>
<dbReference type="GO" id="GO:0003924">
    <property type="term" value="F:GTPase activity"/>
    <property type="evidence" value="ECO:0007669"/>
    <property type="project" value="InterPro"/>
</dbReference>
<dbReference type="GO" id="GO:0006616">
    <property type="term" value="P:SRP-dependent cotranslational protein targeting to membrane, translocation"/>
    <property type="evidence" value="ECO:0007669"/>
    <property type="project" value="TreeGrafter"/>
</dbReference>
<dbReference type="CDD" id="cd17875">
    <property type="entry name" value="SRP54_G"/>
    <property type="match status" value="1"/>
</dbReference>
<dbReference type="FunFam" id="1.10.260.30:FF:000004">
    <property type="entry name" value="Signal recognition particle 54 kDa protein"/>
    <property type="match status" value="1"/>
</dbReference>
<dbReference type="FunFam" id="3.40.50.300:FF:000022">
    <property type="entry name" value="Signal recognition particle 54 kDa subunit"/>
    <property type="match status" value="1"/>
</dbReference>
<dbReference type="FunFam" id="1.20.120.140:FF:000001">
    <property type="entry name" value="Signal recognition particle GTPase"/>
    <property type="match status" value="1"/>
</dbReference>
<dbReference type="Gene3D" id="3.40.50.300">
    <property type="entry name" value="P-loop containing nucleotide triphosphate hydrolases"/>
    <property type="match status" value="1"/>
</dbReference>
<dbReference type="Gene3D" id="1.20.120.140">
    <property type="entry name" value="Signal recognition particle SRP54, nucleotide-binding domain"/>
    <property type="match status" value="1"/>
</dbReference>
<dbReference type="Gene3D" id="1.10.260.30">
    <property type="entry name" value="Signal recognition particle, SRP54 subunit, M-domain"/>
    <property type="match status" value="1"/>
</dbReference>
<dbReference type="HAMAP" id="MF_00306">
    <property type="entry name" value="SRP54"/>
    <property type="match status" value="1"/>
</dbReference>
<dbReference type="InterPro" id="IPR003593">
    <property type="entry name" value="AAA+_ATPase"/>
</dbReference>
<dbReference type="InterPro" id="IPR027417">
    <property type="entry name" value="P-loop_NTPase"/>
</dbReference>
<dbReference type="InterPro" id="IPR036891">
    <property type="entry name" value="Signal_recog_part_SRP54_M_sf"/>
</dbReference>
<dbReference type="InterPro" id="IPR013822">
    <property type="entry name" value="Signal_recog_particl_SRP54_hlx"/>
</dbReference>
<dbReference type="InterPro" id="IPR004125">
    <property type="entry name" value="Signal_recog_particle_SRP54_M"/>
</dbReference>
<dbReference type="InterPro" id="IPR036225">
    <property type="entry name" value="SRP/SRP_N"/>
</dbReference>
<dbReference type="InterPro" id="IPR022941">
    <property type="entry name" value="SRP54"/>
</dbReference>
<dbReference type="InterPro" id="IPR006325">
    <property type="entry name" value="SRP54_euk"/>
</dbReference>
<dbReference type="InterPro" id="IPR000897">
    <property type="entry name" value="SRP54_GTPase_dom"/>
</dbReference>
<dbReference type="InterPro" id="IPR042101">
    <property type="entry name" value="SRP54_N_sf"/>
</dbReference>
<dbReference type="NCBIfam" id="TIGR01425">
    <property type="entry name" value="SRP54_euk"/>
    <property type="match status" value="1"/>
</dbReference>
<dbReference type="PANTHER" id="PTHR11564">
    <property type="entry name" value="SIGNAL RECOGNITION PARTICLE 54K PROTEIN SRP54"/>
    <property type="match status" value="1"/>
</dbReference>
<dbReference type="PANTHER" id="PTHR11564:SF5">
    <property type="entry name" value="SIGNAL RECOGNITION PARTICLE SUBUNIT SRP54"/>
    <property type="match status" value="1"/>
</dbReference>
<dbReference type="Pfam" id="PF00448">
    <property type="entry name" value="SRP54"/>
    <property type="match status" value="1"/>
</dbReference>
<dbReference type="Pfam" id="PF02881">
    <property type="entry name" value="SRP54_N"/>
    <property type="match status" value="1"/>
</dbReference>
<dbReference type="Pfam" id="PF02978">
    <property type="entry name" value="SRP_SPB"/>
    <property type="match status" value="1"/>
</dbReference>
<dbReference type="SMART" id="SM00382">
    <property type="entry name" value="AAA"/>
    <property type="match status" value="1"/>
</dbReference>
<dbReference type="SMART" id="SM00962">
    <property type="entry name" value="SRP54"/>
    <property type="match status" value="1"/>
</dbReference>
<dbReference type="SMART" id="SM00963">
    <property type="entry name" value="SRP54_N"/>
    <property type="match status" value="1"/>
</dbReference>
<dbReference type="SUPFAM" id="SSF47364">
    <property type="entry name" value="Domain of the SRP/SRP receptor G-proteins"/>
    <property type="match status" value="1"/>
</dbReference>
<dbReference type="SUPFAM" id="SSF52540">
    <property type="entry name" value="P-loop containing nucleoside triphosphate hydrolases"/>
    <property type="match status" value="1"/>
</dbReference>
<dbReference type="SUPFAM" id="SSF47446">
    <property type="entry name" value="Signal peptide-binding domain"/>
    <property type="match status" value="1"/>
</dbReference>
<dbReference type="PROSITE" id="PS00300">
    <property type="entry name" value="SRP54"/>
    <property type="match status" value="1"/>
</dbReference>
<feature type="chain" id="PRO_0000101207" description="Signal recognition particle subunit SRP54 1">
    <location>
        <begin position="1"/>
        <end position="497"/>
    </location>
</feature>
<feature type="region of interest" description="G-domain">
    <location>
        <begin position="1"/>
        <end position="295"/>
    </location>
</feature>
<feature type="region of interest" description="M-domain">
    <location>
        <begin position="296"/>
        <end position="497"/>
    </location>
</feature>
<feature type="binding site" evidence="1">
    <location>
        <begin position="108"/>
        <end position="115"/>
    </location>
    <ligand>
        <name>GTP</name>
        <dbReference type="ChEBI" id="CHEBI:37565"/>
    </ligand>
</feature>
<feature type="binding site" evidence="1">
    <location>
        <begin position="190"/>
        <end position="194"/>
    </location>
    <ligand>
        <name>GTP</name>
        <dbReference type="ChEBI" id="CHEBI:37565"/>
    </ligand>
</feature>
<feature type="binding site" evidence="1">
    <location>
        <begin position="248"/>
        <end position="251"/>
    </location>
    <ligand>
        <name>GTP</name>
        <dbReference type="ChEBI" id="CHEBI:37565"/>
    </ligand>
</feature>
<organism>
    <name type="scientific">Hordeum vulgare</name>
    <name type="common">Barley</name>
    <dbReference type="NCBI Taxonomy" id="4513"/>
    <lineage>
        <taxon>Eukaryota</taxon>
        <taxon>Viridiplantae</taxon>
        <taxon>Streptophyta</taxon>
        <taxon>Embryophyta</taxon>
        <taxon>Tracheophyta</taxon>
        <taxon>Spermatophyta</taxon>
        <taxon>Magnoliopsida</taxon>
        <taxon>Liliopsida</taxon>
        <taxon>Poales</taxon>
        <taxon>Poaceae</taxon>
        <taxon>BOP clade</taxon>
        <taxon>Pooideae</taxon>
        <taxon>Triticodae</taxon>
        <taxon>Triticeae</taxon>
        <taxon>Hordeinae</taxon>
        <taxon>Hordeum</taxon>
    </lineage>
</organism>
<reference key="1">
    <citation type="submission" date="1995-10" db="EMBL/GenBank/DDBJ databases">
        <authorList>
            <person name="Chu B."/>
            <person name="Brodl M.R."/>
            <person name="Belanger F.C."/>
        </authorList>
    </citation>
    <scope>NUCLEOTIDE SEQUENCE [MRNA]</scope>
    <source>
        <tissue>Root</tissue>
        <tissue>Shoot</tissue>
    </source>
</reference>
<gene>
    <name type="primary">SRP54-1</name>
</gene>
<keyword id="KW-0963">Cytoplasm</keyword>
<keyword id="KW-0256">Endoplasmic reticulum</keyword>
<keyword id="KW-0342">GTP-binding</keyword>
<keyword id="KW-0378">Hydrolase</keyword>
<keyword id="KW-0547">Nucleotide-binding</keyword>
<keyword id="KW-0687">Ribonucleoprotein</keyword>
<keyword id="KW-0694">RNA-binding</keyword>
<keyword id="KW-0733">Signal recognition particle</keyword>
<accession>P49968</accession>
<proteinExistence type="evidence at transcript level"/>
<name>SR541_HORVU</name>
<comment type="function">
    <text evidence="2 3">Component of the signal recognition particle (SRP) complex, a ribonucleoprotein complex that mediates the cotranslational targeting of secretory and membrane proteins to the endoplasmic reticulum (ER). As part of the SRP complex, associates with the SRP receptor (SR) component SRPRA to target secretory proteins to the endoplasmic reticulum membrane. Binds to the signal sequence of presecretory proteins when they emerge from the ribosomes. Displays basal GTPase activity, and stimulates reciprocal GTPase activation of the SR subunit SRPRA. Forms a guanosine 5'-triphosphate (GTP)-dependent complex with the SR subunit SRPRA. SR compaction and GTPase mediated rearrangement of SR drive SRP-mediated cotranslational protein translocation into the ER (By similarity). Requires the presence of SRP9/SRP14 and/or SRP19 to stably interact with RNA (By similarity).</text>
</comment>
<comment type="catalytic activity">
    <reaction evidence="3">
        <text>GTP + H2O = GDP + phosphate + H(+)</text>
        <dbReference type="Rhea" id="RHEA:19669"/>
        <dbReference type="ChEBI" id="CHEBI:15377"/>
        <dbReference type="ChEBI" id="CHEBI:15378"/>
        <dbReference type="ChEBI" id="CHEBI:37565"/>
        <dbReference type="ChEBI" id="CHEBI:43474"/>
        <dbReference type="ChEBI" id="CHEBI:58189"/>
        <dbReference type="EC" id="3.6.5.4"/>
    </reaction>
    <physiologicalReaction direction="left-to-right" evidence="3">
        <dbReference type="Rhea" id="RHEA:19670"/>
    </physiologicalReaction>
</comment>
<comment type="subunit">
    <text evidence="3">Component of a signal recognition particle (SRP) complex that consists of a 7SL RNA molecule of 300 nucleotides and six protein subunits: SRP72, SRP68, SRP54, SRP19, SRP14 and SRP9.</text>
</comment>
<comment type="subcellular location">
    <subcellularLocation>
        <location evidence="3">Cytoplasm</location>
    </subcellularLocation>
    <subcellularLocation>
        <location evidence="3">Endoplasmic reticulum</location>
    </subcellularLocation>
</comment>
<comment type="domain">
    <text evidence="3">The NG domain, also named G domain, is a special guanosine triphosphatase (GTPase) domain, which binds GTP and forms a guanosine 5'-triphosphate (GTP)-dependent complex with a homologous NG domain in the SRP receptor subunit SRPRA. The two NG domains undergo cooperative rearrangements upon their assembly, which culminate in the reciprocal activation of the GTPase activity of one another. SRP receptor compaction upon binding with cargo-loaded SRP and GTPase rearrangement drive SRP-mediated cotranslational protein translocation into the ER.</text>
</comment>
<comment type="domain">
    <text evidence="3">The M domain binds the 7SL RNA in presence of SRP19 and binds the signal sequence of presecretory proteins.</text>
</comment>
<comment type="similarity">
    <text evidence="4">Belongs to the GTP-binding SRP family. SRP54 subfamily.</text>
</comment>
<evidence type="ECO:0000250" key="1"/>
<evidence type="ECO:0000250" key="2">
    <source>
        <dbReference type="UniProtKB" id="P61010"/>
    </source>
</evidence>
<evidence type="ECO:0000250" key="3">
    <source>
        <dbReference type="UniProtKB" id="P61011"/>
    </source>
</evidence>
<evidence type="ECO:0000305" key="4"/>